<dbReference type="EMBL" id="AY243312">
    <property type="protein sequence ID" value="AAO89415.1"/>
    <property type="molecule type" value="Genomic_DNA"/>
</dbReference>
<dbReference type="EMBL" id="M32064">
    <property type="protein sequence ID" value="AAA48348.2"/>
    <property type="molecule type" value="Genomic_DNA"/>
</dbReference>
<dbReference type="PIR" id="A36415">
    <property type="entry name" value="A36415"/>
</dbReference>
<dbReference type="RefSeq" id="YP_233018.1">
    <property type="nucleotide sequence ID" value="NC_006998.1"/>
</dbReference>
<dbReference type="PDB" id="8GP6">
    <property type="method" value="X-ray"/>
    <property type="resolution" value="2.70 A"/>
    <property type="chains" value="A=1-342"/>
</dbReference>
<dbReference type="PDBsum" id="8GP6"/>
<dbReference type="SMR" id="P16710"/>
<dbReference type="IntAct" id="P16710">
    <property type="interactions" value="1"/>
</dbReference>
<dbReference type="MINT" id="P16710"/>
<dbReference type="iPTMnet" id="P16710"/>
<dbReference type="DNASU" id="3707666"/>
<dbReference type="GeneID" id="3707666"/>
<dbReference type="KEGG" id="vg:3707666"/>
<dbReference type="Proteomes" id="UP000000344">
    <property type="component" value="Genome"/>
</dbReference>
<dbReference type="GO" id="GO:0016020">
    <property type="term" value="C:membrane"/>
    <property type="evidence" value="ECO:0007669"/>
    <property type="project" value="UniProtKB-KW"/>
</dbReference>
<dbReference type="GO" id="GO:0019031">
    <property type="term" value="C:viral envelope"/>
    <property type="evidence" value="ECO:0007669"/>
    <property type="project" value="UniProtKB-KW"/>
</dbReference>
<dbReference type="GO" id="GO:0055036">
    <property type="term" value="C:virion membrane"/>
    <property type="evidence" value="ECO:0007669"/>
    <property type="project" value="UniProtKB-SubCell"/>
</dbReference>
<dbReference type="GO" id="GO:0005524">
    <property type="term" value="F:ATP binding"/>
    <property type="evidence" value="ECO:0007669"/>
    <property type="project" value="UniProtKB-KW"/>
</dbReference>
<dbReference type="GO" id="GO:0003677">
    <property type="term" value="F:DNA binding"/>
    <property type="evidence" value="ECO:0007669"/>
    <property type="project" value="UniProtKB-KW"/>
</dbReference>
<dbReference type="GO" id="GO:0004386">
    <property type="term" value="F:helicase activity"/>
    <property type="evidence" value="ECO:0007669"/>
    <property type="project" value="UniProtKB-KW"/>
</dbReference>
<dbReference type="GO" id="GO:0016787">
    <property type="term" value="F:hydrolase activity"/>
    <property type="evidence" value="ECO:0007669"/>
    <property type="project" value="UniProtKB-KW"/>
</dbReference>
<dbReference type="GO" id="GO:0006353">
    <property type="term" value="P:DNA-templated transcription termination"/>
    <property type="evidence" value="ECO:0007669"/>
    <property type="project" value="UniProtKB-KW"/>
</dbReference>
<dbReference type="GO" id="GO:0039663">
    <property type="term" value="P:membrane fusion involved in viral entry into host cell"/>
    <property type="evidence" value="ECO:0007669"/>
    <property type="project" value="UniProtKB-KW"/>
</dbReference>
<dbReference type="GO" id="GO:0046718">
    <property type="term" value="P:symbiont entry into host cell"/>
    <property type="evidence" value="ECO:0007669"/>
    <property type="project" value="UniProtKB-KW"/>
</dbReference>
<dbReference type="InterPro" id="IPR004251">
    <property type="entry name" value="Pox_virus_G9/A16"/>
</dbReference>
<dbReference type="Pfam" id="PF03003">
    <property type="entry name" value="Pox_G9-A16"/>
    <property type="match status" value="1"/>
</dbReference>
<feature type="initiator methionine" description="Removed; by host">
    <location>
        <position position="1"/>
    </location>
</feature>
<feature type="chain" id="PRO_0000099253" description="Virion membrane protein OPG143">
    <location>
        <begin position="2"/>
        <end position="377"/>
    </location>
</feature>
<feature type="topological domain" description="Virion surface" evidence="1">
    <location>
        <begin position="2"/>
        <end position="342"/>
    </location>
</feature>
<feature type="transmembrane region" description="Helical; Signal-anchor for type II membrane protein" evidence="1">
    <location>
        <begin position="343"/>
        <end position="363"/>
    </location>
</feature>
<feature type="topological domain" description="Intravirion" evidence="1">
    <location>
        <begin position="364"/>
        <end position="377"/>
    </location>
</feature>
<feature type="lipid moiety-binding region" description="N-myristoyl glycine; by host" evidence="6">
    <location>
        <position position="2"/>
    </location>
</feature>
<feature type="mutagenesis site" description="Complete loss of myristoylation." evidence="6">
    <original>G</original>
    <variation>A</variation>
    <location>
        <position position="2"/>
    </location>
</feature>
<feature type="strand" evidence="8">
    <location>
        <begin position="8"/>
        <end position="14"/>
    </location>
</feature>
<feature type="strand" evidence="8">
    <location>
        <begin position="19"/>
        <end position="27"/>
    </location>
</feature>
<feature type="helix" evidence="8">
    <location>
        <begin position="31"/>
        <end position="33"/>
    </location>
</feature>
<feature type="strand" evidence="8">
    <location>
        <begin position="35"/>
        <end position="40"/>
    </location>
</feature>
<feature type="strand" evidence="8">
    <location>
        <begin position="46"/>
        <end position="48"/>
    </location>
</feature>
<feature type="strand" evidence="8">
    <location>
        <begin position="60"/>
        <end position="62"/>
    </location>
</feature>
<feature type="helix" evidence="8">
    <location>
        <begin position="68"/>
        <end position="71"/>
    </location>
</feature>
<feature type="helix" evidence="8">
    <location>
        <begin position="76"/>
        <end position="79"/>
    </location>
</feature>
<feature type="strand" evidence="8">
    <location>
        <begin position="82"/>
        <end position="85"/>
    </location>
</feature>
<feature type="strand" evidence="8">
    <location>
        <begin position="89"/>
        <end position="92"/>
    </location>
</feature>
<feature type="strand" evidence="8">
    <location>
        <begin position="100"/>
        <end position="102"/>
    </location>
</feature>
<feature type="helix" evidence="8">
    <location>
        <begin position="109"/>
        <end position="118"/>
    </location>
</feature>
<feature type="strand" evidence="8">
    <location>
        <begin position="123"/>
        <end position="127"/>
    </location>
</feature>
<feature type="strand" evidence="8">
    <location>
        <begin position="129"/>
        <end position="132"/>
    </location>
</feature>
<feature type="helix" evidence="8">
    <location>
        <begin position="140"/>
        <end position="148"/>
    </location>
</feature>
<feature type="helix" evidence="8">
    <location>
        <begin position="157"/>
        <end position="159"/>
    </location>
</feature>
<feature type="strand" evidence="8">
    <location>
        <begin position="164"/>
        <end position="166"/>
    </location>
</feature>
<feature type="helix" evidence="8">
    <location>
        <begin position="169"/>
        <end position="178"/>
    </location>
</feature>
<feature type="helix" evidence="8">
    <location>
        <begin position="183"/>
        <end position="189"/>
    </location>
</feature>
<feature type="helix" evidence="8">
    <location>
        <begin position="194"/>
        <end position="207"/>
    </location>
</feature>
<feature type="helix" evidence="8">
    <location>
        <begin position="211"/>
        <end position="220"/>
    </location>
</feature>
<feature type="turn" evidence="8">
    <location>
        <begin position="221"/>
        <end position="225"/>
    </location>
</feature>
<feature type="helix" evidence="8">
    <location>
        <begin position="226"/>
        <end position="238"/>
    </location>
</feature>
<feature type="helix" evidence="8">
    <location>
        <begin position="243"/>
        <end position="245"/>
    </location>
</feature>
<feature type="turn" evidence="8">
    <location>
        <begin position="246"/>
        <end position="248"/>
    </location>
</feature>
<feature type="helix" evidence="8">
    <location>
        <begin position="261"/>
        <end position="266"/>
    </location>
</feature>
<feature type="turn" evidence="8">
    <location>
        <begin position="268"/>
        <end position="270"/>
    </location>
</feature>
<feature type="strand" evidence="8">
    <location>
        <begin position="271"/>
        <end position="274"/>
    </location>
</feature>
<feature type="helix" evidence="8">
    <location>
        <begin position="277"/>
        <end position="279"/>
    </location>
</feature>
<feature type="helix" evidence="8">
    <location>
        <begin position="282"/>
        <end position="290"/>
    </location>
</feature>
<reference key="1">
    <citation type="submission" date="2003-02" db="EMBL/GenBank/DDBJ databases">
        <title>Sequencing of the coding region of Vaccinia-WR to an average 9-fold redundancy and an error rate of 0.16/10kb.</title>
        <authorList>
            <person name="Esposito J.J."/>
            <person name="Frace A.M."/>
            <person name="Sammons S.A."/>
            <person name="Olsen-Rasmussen M."/>
            <person name="Osborne J."/>
            <person name="Wohlhueter R."/>
        </authorList>
    </citation>
    <scope>NUCLEOTIDE SEQUENCE [LARGE SCALE GENOMIC DNA]</scope>
</reference>
<reference key="2">
    <citation type="journal article" date="1990" name="J. Virol.">
        <title>Structure and expression of the vaccinia virus gene which prevents virus-induced breakdown of RNA.</title>
        <authorList>
            <person name="Pacha R.F."/>
            <person name="Meis R.J."/>
            <person name="Condit R.C."/>
        </authorList>
    </citation>
    <scope>NUCLEOTIDE SEQUENCE [GENOMIC DNA] OF 1-275</scope>
</reference>
<reference key="3">
    <citation type="journal article" date="1997" name="J. Virol.">
        <title>Identification and analysis of three myristylated vaccinia virus late proteins.</title>
        <authorList>
            <person name="Martin K.H."/>
            <person name="Grosenbach D.W."/>
            <person name="Franke C.A."/>
            <person name="Hruby D.E."/>
        </authorList>
    </citation>
    <scope>MYRISTOYLATION AT GLY-2</scope>
    <scope>SUBCELLULAR LOCATION</scope>
    <scope>MUTAGENESIS OF GLY-2</scope>
</reference>
<reference key="4">
    <citation type="journal article" date="2005" name="Proc. Natl. Acad. Sci. U.S.A.">
        <title>Poxvirus multiprotein entry-fusion complex.</title>
        <authorList>
            <person name="Senkevich T.G."/>
            <person name="Ojeda S."/>
            <person name="Townsley A."/>
            <person name="Nelson G.E."/>
            <person name="Moss B."/>
        </authorList>
    </citation>
    <scope>IDENTIFICATION IN A COMPLEX WITH OPG147; OPG155; OPG086; OPG094; OPG107; OPG104 AND OPG099</scope>
</reference>
<reference key="5">
    <citation type="journal article" date="2006" name="J. Virol.">
        <title>Entry of vaccinia virus and cell-cell fusion require a highly conserved cysteine-rich membrane protein encoded by the A16L gene.</title>
        <authorList>
            <person name="Ojeda S."/>
            <person name="Senkevich T.G."/>
            <person name="Moss B."/>
        </authorList>
    </citation>
    <scope>FUNCTION</scope>
    <scope>DISULFIDE BONDS</scope>
    <scope>INDUCTION</scope>
    <scope>TOPOLOGY</scope>
</reference>
<reference key="6">
    <citation type="journal article" date="2008" name="J. Virol.">
        <title>Vaccinia virus A56/K2 fusion regulatory protein interacts with the A16 and G9 subunits of the entry fusion complex.</title>
        <authorList>
            <person name="Wagenaar T.R."/>
            <person name="Ojeda S."/>
            <person name="Moss B."/>
        </authorList>
    </citation>
    <scope>INTERACTION WITH OPG094</scope>
</reference>
<reference key="7">
    <citation type="journal article" date="2012" name="J. Virol.">
        <title>Vaccinia mature virus fusion regulator A26 protein binds to A16 and G9 proteins of the viral entry fusion complex and dissociates from mature virions at low pH.</title>
        <authorList>
            <person name="Chang S.J."/>
            <person name="Shih A.C."/>
            <person name="Tang Y.L."/>
            <person name="Chang W."/>
        </authorList>
    </citation>
    <scope>FUNCTION</scope>
    <scope>INTERACTION WITH OPG153</scope>
</reference>
<name>PG143_VACCW</name>
<evidence type="ECO:0000255" key="1"/>
<evidence type="ECO:0000269" key="2">
    <source>
    </source>
</evidence>
<evidence type="ECO:0000269" key="3">
    <source>
    </source>
</evidence>
<evidence type="ECO:0000269" key="4">
    <source>
    </source>
</evidence>
<evidence type="ECO:0000269" key="5">
    <source>
    </source>
</evidence>
<evidence type="ECO:0000269" key="6">
    <source>
    </source>
</evidence>
<evidence type="ECO:0000305" key="7"/>
<evidence type="ECO:0007829" key="8">
    <source>
        <dbReference type="PDB" id="8GP6"/>
    </source>
</evidence>
<protein>
    <recommendedName>
        <fullName>Virion membrane protein OPG143</fullName>
    </recommendedName>
</protein>
<sequence>MGAAVTLNRIKIAPGIADIRDKYMELGFNYPEYNRAVKFAEESYTYYYETSPGEIKPKFCLIDGMSIDHCSSFIVPEFAKQYVLIHGEPCSSFKFRPGSLIYYQNEVTPEYIKDLKHATDYIASGQRCHFIKKDYLLGDSDSVAKCCSKTNTKHCPKIFNNNYKTEHCDDFMTGFCRNDPGNPNCLEWLRAKRKPAMSTYSDICSKHMDARYCSEFIRIIRPDYFTFGDTALYVFCNDHKGNRNCWCANYPKSNSGDKYLGPRVCWLHECTDESRDRKWLYYNQDVQRTRCKYVGCTINVNSLALKNSQAELTSNCTRTTSAVGDVHPGEPVVKDKIKLPTWLGAAITLVVISVIFYFISIYSRPKIKTNDINVRRR</sequence>
<keyword id="KW-0002">3D-structure</keyword>
<keyword id="KW-0067">ATP-binding</keyword>
<keyword id="KW-1015">Disulfide bond</keyword>
<keyword id="KW-0238">DNA-binding</keyword>
<keyword id="KW-1168">Fusion of virus membrane with host membrane</keyword>
<keyword id="KW-0347">Helicase</keyword>
<keyword id="KW-0378">Hydrolase</keyword>
<keyword id="KW-0426">Late protein</keyword>
<keyword id="KW-0449">Lipoprotein</keyword>
<keyword id="KW-0472">Membrane</keyword>
<keyword id="KW-0519">Myristate</keyword>
<keyword id="KW-0547">Nucleotide-binding</keyword>
<keyword id="KW-0597">Phosphoprotein</keyword>
<keyword id="KW-1185">Reference proteome</keyword>
<keyword id="KW-0735">Signal-anchor</keyword>
<keyword id="KW-0804">Transcription</keyword>
<keyword id="KW-0805">Transcription regulation</keyword>
<keyword id="KW-0806">Transcription termination</keyword>
<keyword id="KW-0812">Transmembrane</keyword>
<keyword id="KW-1133">Transmembrane helix</keyword>
<keyword id="KW-0261">Viral envelope protein</keyword>
<keyword id="KW-1162">Viral penetration into host cytoplasm</keyword>
<keyword id="KW-0946">Virion</keyword>
<keyword id="KW-1160">Virus entry into host cell</keyword>
<organism>
    <name type="scientific">Vaccinia virus (strain Western Reserve)</name>
    <name type="common">VACV</name>
    <name type="synonym">Vaccinia virus (strain WR)</name>
    <dbReference type="NCBI Taxonomy" id="10254"/>
    <lineage>
        <taxon>Viruses</taxon>
        <taxon>Varidnaviria</taxon>
        <taxon>Bamfordvirae</taxon>
        <taxon>Nucleocytoviricota</taxon>
        <taxon>Pokkesviricetes</taxon>
        <taxon>Chitovirales</taxon>
        <taxon>Poxviridae</taxon>
        <taxon>Chordopoxvirinae</taxon>
        <taxon>Orthopoxvirus</taxon>
        <taxon>Vaccinia virus</taxon>
    </lineage>
</organism>
<comment type="function">
    <text evidence="3 5">Envelope protein part of the entry-fusion complex responsible for the virus membrane fusion with host cell membrane during virus entry. Also plays a role in cell-cell fusion (syncytium formation).</text>
</comment>
<comment type="subunit">
    <text evidence="2 4">Part of a stable entry-fusion complex (EFC) which is at least composed of proteins OPG143, OPG147, OPG155, OPG086, OPG094, OPG107, OPG104, and OPG099. Formation of the viral membrane is necessary for the assembly of the complex. Interacts with OPG094. Interacts with OPG153 (PubMed:22278246).</text>
</comment>
<comment type="subcellular location">
    <subcellularLocation>
        <location evidence="7">Virion membrane</location>
        <topology evidence="7">Single-pass type II membrane protein</topology>
    </subcellularLocation>
    <text evidence="6 7">Component of the mature virion (MV) membrane (Probable). The mature virion is located in the cytoplasm of infected cells and is probably released by cell lysis.</text>
</comment>
<comment type="induction">
    <text evidence="3">Expressed in the late phase of the viral replicative cycle.</text>
</comment>
<comment type="PTM">
    <text>Most cysteines are linked by disulfide bonds. They are created by the viral disulfide bond formation pathway, a poxvirus-specific redox pathway that operates on the cytoplasmic side of the MV membranes.</text>
</comment>
<comment type="similarity">
    <text evidence="7">Belongs to the orthopoxvirus OPG143 family.</text>
</comment>
<proteinExistence type="evidence at protein level"/>
<organismHost>
    <name type="scientific">Bos taurus</name>
    <name type="common">Bovine</name>
    <dbReference type="NCBI Taxonomy" id="9913"/>
</organismHost>
<gene>
    <name type="primary">OPG143</name>
    <name type="ordered locus">VACWR136</name>
    <name type="ORF">A16L</name>
</gene>
<accession>P16710</accession>
<accession>Q80HV5</accession>